<organism>
    <name type="scientific">Polaromonas naphthalenivorans (strain CJ2)</name>
    <dbReference type="NCBI Taxonomy" id="365044"/>
    <lineage>
        <taxon>Bacteria</taxon>
        <taxon>Pseudomonadati</taxon>
        <taxon>Pseudomonadota</taxon>
        <taxon>Betaproteobacteria</taxon>
        <taxon>Burkholderiales</taxon>
        <taxon>Comamonadaceae</taxon>
        <taxon>Polaromonas</taxon>
    </lineage>
</organism>
<sequence>MNLQGKQVTVHDMTLRDGMHPKRHLMTLDQMKSIACGLDAAGVPLIEVTHGDGLGGSSVNYGFPAHTDEEYLGAVIPLMKQAKVSALLIPGIGTVEHLLMAKDLGVGTIRVATHCTEADVSEQHITKSRALGLDTVGFLMMAHMASPEKLVSQALLMQGYGANCIYVTDSAGYMLPDDVKARLGAVRAALKPETELGFHGHHNMAMGVANSIAAIEAGANRIDAAAAGLGAGAGNTPMEVFIAVCARMGIETGVDVFKIQDVAEDLVVPIMDHIIRIDRDSLTLGYAGVYSSFLLFAKRASVKYGVPARDILVELGRRGMVGGQEDMIEDTAMTMARERGLTLAAA</sequence>
<geneLocation type="plasmid">
    <name>pPNAP01</name>
</geneLocation>
<name>HOA_POLNA</name>
<evidence type="ECO:0000255" key="1">
    <source>
        <dbReference type="HAMAP-Rule" id="MF_01656"/>
    </source>
</evidence>
<accession>A1VUV1</accession>
<keyword id="KW-0058">Aromatic hydrocarbons catabolism</keyword>
<keyword id="KW-0456">Lyase</keyword>
<keyword id="KW-0464">Manganese</keyword>
<keyword id="KW-0479">Metal-binding</keyword>
<keyword id="KW-0614">Plasmid</keyword>
<keyword id="KW-1185">Reference proteome</keyword>
<protein>
    <recommendedName>
        <fullName evidence="1">4-hydroxy-2-oxovalerate aldolase</fullName>
        <shortName evidence="1">HOA</shortName>
        <ecNumber evidence="1">4.1.3.39</ecNumber>
    </recommendedName>
    <alternativeName>
        <fullName evidence="1">4-hydroxy-2-keto-pentanoic acid aldolase</fullName>
    </alternativeName>
    <alternativeName>
        <fullName evidence="1">4-hydroxy-2-oxopentanoate aldolase</fullName>
    </alternativeName>
</protein>
<comment type="catalytic activity">
    <reaction evidence="1">
        <text>(S)-4-hydroxy-2-oxopentanoate = acetaldehyde + pyruvate</text>
        <dbReference type="Rhea" id="RHEA:22624"/>
        <dbReference type="ChEBI" id="CHEBI:15343"/>
        <dbReference type="ChEBI" id="CHEBI:15361"/>
        <dbReference type="ChEBI" id="CHEBI:73143"/>
        <dbReference type="EC" id="4.1.3.39"/>
    </reaction>
</comment>
<comment type="similarity">
    <text evidence="1">Belongs to the 4-hydroxy-2-oxovalerate aldolase family.</text>
</comment>
<feature type="chain" id="PRO_0000387877" description="4-hydroxy-2-oxovalerate aldolase">
    <location>
        <begin position="1"/>
        <end position="346"/>
    </location>
</feature>
<feature type="domain" description="Pyruvate carboxyltransferase" evidence="1">
    <location>
        <begin position="8"/>
        <end position="260"/>
    </location>
</feature>
<feature type="active site" description="Proton acceptor" evidence="1">
    <location>
        <position position="20"/>
    </location>
</feature>
<feature type="binding site" evidence="1">
    <location>
        <begin position="16"/>
        <end position="17"/>
    </location>
    <ligand>
        <name>substrate</name>
    </ligand>
</feature>
<feature type="binding site" evidence="1">
    <location>
        <position position="17"/>
    </location>
    <ligand>
        <name>Mn(2+)</name>
        <dbReference type="ChEBI" id="CHEBI:29035"/>
    </ligand>
</feature>
<feature type="binding site" evidence="1">
    <location>
        <position position="170"/>
    </location>
    <ligand>
        <name>substrate</name>
    </ligand>
</feature>
<feature type="binding site" evidence="1">
    <location>
        <position position="199"/>
    </location>
    <ligand>
        <name>Mn(2+)</name>
        <dbReference type="ChEBI" id="CHEBI:29035"/>
    </ligand>
</feature>
<feature type="binding site" evidence="1">
    <location>
        <position position="199"/>
    </location>
    <ligand>
        <name>substrate</name>
    </ligand>
</feature>
<feature type="binding site" evidence="1">
    <location>
        <position position="201"/>
    </location>
    <ligand>
        <name>Mn(2+)</name>
        <dbReference type="ChEBI" id="CHEBI:29035"/>
    </ligand>
</feature>
<feature type="binding site" evidence="1">
    <location>
        <position position="290"/>
    </location>
    <ligand>
        <name>substrate</name>
    </ligand>
</feature>
<feature type="site" description="Transition state stabilizer" evidence="1">
    <location>
        <position position="16"/>
    </location>
</feature>
<proteinExistence type="inferred from homology"/>
<gene>
    <name type="ordered locus">Pnap_4142</name>
</gene>
<dbReference type="EC" id="4.1.3.39" evidence="1"/>
<dbReference type="EMBL" id="CP000530">
    <property type="protein sequence ID" value="ABM39429.1"/>
    <property type="molecule type" value="Genomic_DNA"/>
</dbReference>
<dbReference type="SMR" id="A1VUV1"/>
<dbReference type="KEGG" id="pna:Pnap_4142"/>
<dbReference type="HOGENOM" id="CLU_049173_0_0_4"/>
<dbReference type="OrthoDB" id="9803573at2"/>
<dbReference type="Proteomes" id="UP000000644">
    <property type="component" value="Plasmid pPNAP01"/>
</dbReference>
<dbReference type="GO" id="GO:0003852">
    <property type="term" value="F:2-isopropylmalate synthase activity"/>
    <property type="evidence" value="ECO:0007669"/>
    <property type="project" value="TreeGrafter"/>
</dbReference>
<dbReference type="GO" id="GO:0008701">
    <property type="term" value="F:4-hydroxy-2-oxovalerate aldolase activity"/>
    <property type="evidence" value="ECO:0007669"/>
    <property type="project" value="UniProtKB-UniRule"/>
</dbReference>
<dbReference type="GO" id="GO:0030145">
    <property type="term" value="F:manganese ion binding"/>
    <property type="evidence" value="ECO:0007669"/>
    <property type="project" value="UniProtKB-UniRule"/>
</dbReference>
<dbReference type="GO" id="GO:0009056">
    <property type="term" value="P:catabolic process"/>
    <property type="evidence" value="ECO:0007669"/>
    <property type="project" value="UniProtKB-KW"/>
</dbReference>
<dbReference type="GO" id="GO:0009098">
    <property type="term" value="P:L-leucine biosynthetic process"/>
    <property type="evidence" value="ECO:0007669"/>
    <property type="project" value="TreeGrafter"/>
</dbReference>
<dbReference type="CDD" id="cd07943">
    <property type="entry name" value="DRE_TIM_HOA"/>
    <property type="match status" value="1"/>
</dbReference>
<dbReference type="Gene3D" id="1.10.8.60">
    <property type="match status" value="1"/>
</dbReference>
<dbReference type="Gene3D" id="3.20.20.70">
    <property type="entry name" value="Aldolase class I"/>
    <property type="match status" value="1"/>
</dbReference>
<dbReference type="HAMAP" id="MF_01656">
    <property type="entry name" value="HOA"/>
    <property type="match status" value="1"/>
</dbReference>
<dbReference type="InterPro" id="IPR050073">
    <property type="entry name" value="2-IPM_HCS-like"/>
</dbReference>
<dbReference type="InterPro" id="IPR017629">
    <property type="entry name" value="4OH_2_O-val_aldolase"/>
</dbReference>
<dbReference type="InterPro" id="IPR013785">
    <property type="entry name" value="Aldolase_TIM"/>
</dbReference>
<dbReference type="InterPro" id="IPR012425">
    <property type="entry name" value="DmpG_comm"/>
</dbReference>
<dbReference type="InterPro" id="IPR035685">
    <property type="entry name" value="DRE_TIM_HOA"/>
</dbReference>
<dbReference type="InterPro" id="IPR000891">
    <property type="entry name" value="PYR_CT"/>
</dbReference>
<dbReference type="NCBIfam" id="TIGR03217">
    <property type="entry name" value="4OH_2_O_val_ald"/>
    <property type="match status" value="1"/>
</dbReference>
<dbReference type="NCBIfam" id="NF006049">
    <property type="entry name" value="PRK08195.1"/>
    <property type="match status" value="1"/>
</dbReference>
<dbReference type="PANTHER" id="PTHR10277:SF9">
    <property type="entry name" value="2-ISOPROPYLMALATE SYNTHASE 1, CHLOROPLASTIC-RELATED"/>
    <property type="match status" value="1"/>
</dbReference>
<dbReference type="PANTHER" id="PTHR10277">
    <property type="entry name" value="HOMOCITRATE SYNTHASE-RELATED"/>
    <property type="match status" value="1"/>
</dbReference>
<dbReference type="Pfam" id="PF07836">
    <property type="entry name" value="DmpG_comm"/>
    <property type="match status" value="1"/>
</dbReference>
<dbReference type="Pfam" id="PF00682">
    <property type="entry name" value="HMGL-like"/>
    <property type="match status" value="1"/>
</dbReference>
<dbReference type="SUPFAM" id="SSF51569">
    <property type="entry name" value="Aldolase"/>
    <property type="match status" value="1"/>
</dbReference>
<dbReference type="SUPFAM" id="SSF89000">
    <property type="entry name" value="post-HMGL domain-like"/>
    <property type="match status" value="1"/>
</dbReference>
<dbReference type="PROSITE" id="PS50991">
    <property type="entry name" value="PYR_CT"/>
    <property type="match status" value="1"/>
</dbReference>
<reference key="1">
    <citation type="journal article" date="2009" name="Environ. Microbiol.">
        <title>The genome of Polaromonas naphthalenivorans strain CJ2, isolated from coal tar-contaminated sediment, reveals physiological and metabolic versatility and evolution through extensive horizontal gene transfer.</title>
        <authorList>
            <person name="Yagi J.M."/>
            <person name="Sims D."/>
            <person name="Brettin T."/>
            <person name="Bruce D."/>
            <person name="Madsen E.L."/>
        </authorList>
    </citation>
    <scope>NUCLEOTIDE SEQUENCE [LARGE SCALE GENOMIC DNA]</scope>
    <source>
        <strain>CJ2</strain>
    </source>
</reference>